<evidence type="ECO:0000250" key="1"/>
<evidence type="ECO:0000269" key="2">
    <source>
    </source>
</evidence>
<evidence type="ECO:0000269" key="3">
    <source>
    </source>
</evidence>
<evidence type="ECO:0000269" key="4">
    <source>
    </source>
</evidence>
<evidence type="ECO:0000269" key="5">
    <source>
    </source>
</evidence>
<evidence type="ECO:0000269" key="6">
    <source>
    </source>
</evidence>
<evidence type="ECO:0000305" key="7"/>
<dbReference type="EC" id="1.15.1.2"/>
<dbReference type="EMBL" id="AE001437">
    <property type="protein sequence ID" value="AAK80404.1"/>
    <property type="molecule type" value="Genomic_DNA"/>
</dbReference>
<dbReference type="PIR" id="A97202">
    <property type="entry name" value="A97202"/>
</dbReference>
<dbReference type="RefSeq" id="NP_349064.1">
    <property type="nucleotide sequence ID" value="NC_003030.1"/>
</dbReference>
<dbReference type="RefSeq" id="WP_010965745.1">
    <property type="nucleotide sequence ID" value="NC_003030.1"/>
</dbReference>
<dbReference type="SMR" id="Q97GB9"/>
<dbReference type="STRING" id="272562.CA_C2450"/>
<dbReference type="KEGG" id="cac:CA_C2450"/>
<dbReference type="PATRIC" id="fig|272562.8.peg.2646"/>
<dbReference type="eggNOG" id="COG2033">
    <property type="taxonomic scope" value="Bacteria"/>
</dbReference>
<dbReference type="HOGENOM" id="CLU_118960_1_0_9"/>
<dbReference type="OrthoDB" id="9814936at2"/>
<dbReference type="BRENDA" id="1.15.1.2">
    <property type="organism ID" value="1452"/>
</dbReference>
<dbReference type="Proteomes" id="UP000000814">
    <property type="component" value="Chromosome"/>
</dbReference>
<dbReference type="GO" id="GO:0009055">
    <property type="term" value="F:electron transfer activity"/>
    <property type="evidence" value="ECO:0000314"/>
    <property type="project" value="UniProtKB"/>
</dbReference>
<dbReference type="GO" id="GO:0005506">
    <property type="term" value="F:iron ion binding"/>
    <property type="evidence" value="ECO:0000314"/>
    <property type="project" value="UniProtKB"/>
</dbReference>
<dbReference type="GO" id="GO:0016721">
    <property type="term" value="F:oxidoreductase activity, acting on superoxide radicals as acceptor"/>
    <property type="evidence" value="ECO:0000314"/>
    <property type="project" value="UniProtKB"/>
</dbReference>
<dbReference type="GO" id="GO:0050605">
    <property type="term" value="F:superoxide reductase activity"/>
    <property type="evidence" value="ECO:0007669"/>
    <property type="project" value="UniProtKB-EC"/>
</dbReference>
<dbReference type="GO" id="GO:0034599">
    <property type="term" value="P:cellular response to oxidative stress"/>
    <property type="evidence" value="ECO:0000270"/>
    <property type="project" value="UniProtKB"/>
</dbReference>
<dbReference type="GO" id="GO:0019430">
    <property type="term" value="P:removal of superoxide radicals"/>
    <property type="evidence" value="ECO:0000314"/>
    <property type="project" value="UniProtKB"/>
</dbReference>
<dbReference type="CDD" id="cd00524">
    <property type="entry name" value="SORL"/>
    <property type="match status" value="1"/>
</dbReference>
<dbReference type="Gene3D" id="2.60.40.730">
    <property type="entry name" value="SOR catalytic domain"/>
    <property type="match status" value="1"/>
</dbReference>
<dbReference type="InterPro" id="IPR002742">
    <property type="entry name" value="Desulfoferrodoxin_Fe-bd_dom"/>
</dbReference>
<dbReference type="InterPro" id="IPR036073">
    <property type="entry name" value="Desulfoferrodoxin_Fe-bd_dom_sf"/>
</dbReference>
<dbReference type="InterPro" id="IPR051233">
    <property type="entry name" value="Desulfoferrodoxin_SOR"/>
</dbReference>
<dbReference type="NCBIfam" id="TIGR00332">
    <property type="entry name" value="neela_ferrous"/>
    <property type="match status" value="1"/>
</dbReference>
<dbReference type="PANTHER" id="PTHR36541">
    <property type="entry name" value="SUPEROXIDE REDUCTASE-RELATED"/>
    <property type="match status" value="1"/>
</dbReference>
<dbReference type="PANTHER" id="PTHR36541:SF1">
    <property type="entry name" value="SUPEROXIDE REDUCTASE-RELATED"/>
    <property type="match status" value="1"/>
</dbReference>
<dbReference type="Pfam" id="PF01880">
    <property type="entry name" value="Desulfoferrodox"/>
    <property type="match status" value="1"/>
</dbReference>
<dbReference type="SUPFAM" id="SSF49367">
    <property type="entry name" value="Superoxide reductase-like"/>
    <property type="match status" value="1"/>
</dbReference>
<gene>
    <name type="primary">dfx</name>
    <name type="synonym">dsr</name>
    <name type="ordered locus">CA_C2450</name>
</gene>
<accession>Q97GB9</accession>
<name>DFX_CLOAB</name>
<organism>
    <name type="scientific">Clostridium acetobutylicum (strain ATCC 824 / DSM 792 / JCM 1419 / IAM 19013 / LMG 5710 / NBRC 13948 / NRRL B-527 / VKM B-1787 / 2291 / W)</name>
    <dbReference type="NCBI Taxonomy" id="272562"/>
    <lineage>
        <taxon>Bacteria</taxon>
        <taxon>Bacillati</taxon>
        <taxon>Bacillota</taxon>
        <taxon>Clostridia</taxon>
        <taxon>Eubacteriales</taxon>
        <taxon>Clostridiaceae</taxon>
        <taxon>Clostridium</taxon>
    </lineage>
</organism>
<proteinExistence type="evidence at protein level"/>
<reference key="1">
    <citation type="journal article" date="2001" name="J. Bacteriol.">
        <title>Genome sequence and comparative analysis of the solvent-producing bacterium Clostridium acetobutylicum.</title>
        <authorList>
            <person name="Noelling J."/>
            <person name="Breton G."/>
            <person name="Omelchenko M.V."/>
            <person name="Makarova K.S."/>
            <person name="Zeng Q."/>
            <person name="Gibson R."/>
            <person name="Lee H.M."/>
            <person name="Dubois J."/>
            <person name="Qiu D."/>
            <person name="Hitti J."/>
            <person name="Wolf Y.I."/>
            <person name="Tatusov R.L."/>
            <person name="Sabathe F."/>
            <person name="Doucette-Stamm L.A."/>
            <person name="Soucaille P."/>
            <person name="Daly M.J."/>
            <person name="Bennett G.N."/>
            <person name="Koonin E.V."/>
            <person name="Smith D.R."/>
        </authorList>
    </citation>
    <scope>NUCLEOTIDE SEQUENCE [LARGE SCALE GENOMIC DNA]</scope>
    <source>
        <strain>ATCC 824 / DSM 792 / JCM 1419 / IAM 19013 / LMG 5710 / NBRC 13948 / NRRL B-527 / VKM B-1787 / 2291 / W</strain>
    </source>
</reference>
<reference key="2">
    <citation type="journal article" date="2009" name="Appl. Environ. Microbiol.">
        <title>O2 and reactive oxygen species detoxification complex, composed of O2-responsive NADH:rubredoxin oxidoreductase-flavoprotein A2-desulfoferrodoxin operon enzymes, rubperoxin, and rubredoxin, in Clostridium acetobutylicum.</title>
        <authorList>
            <person name="Kawasaki S."/>
            <person name="Sakai Y."/>
            <person name="Takahashi T."/>
            <person name="Suzuki I."/>
            <person name="Niimura Y."/>
        </authorList>
    </citation>
    <scope>PROTEIN SEQUENCE OF 1-20</scope>
    <scope>FUNCTION</scope>
    <scope>CATALYTIC ACTIVITY</scope>
    <scope>COFACTOR</scope>
    <scope>INDUCTION</scope>
    <source>
        <strain>ATCC 824 / DSM 792 / JCM 1419 / IAM 19013 / LMG 5710 / NBRC 13948 / NRRL B-527 / VKM B-1787 / 2291 / W</strain>
    </source>
</reference>
<reference key="3">
    <citation type="journal article" date="2005" name="Appl. Environ. Microbiol.">
        <title>Adaptive responses to oxygen stress in obligatory anaerobes Clostridium acetobutylicum and Clostridium aminovalericum.</title>
        <authorList>
            <person name="Kawasaki S."/>
            <person name="Watamura Y."/>
            <person name="Ono M."/>
            <person name="Watanabe T."/>
            <person name="Takeda K."/>
            <person name="Niimura Y."/>
        </authorList>
    </citation>
    <scope>INDUCTION BY LOW LEVELS OF OXYGEN</scope>
    <source>
        <strain>ATCC 824 / DSM 792 / JCM 1419 / IAM 19013 / LMG 5710 / NBRC 13948 / NRRL B-527 / VKM B-1787 / 2291 / W</strain>
    </source>
</reference>
<reference key="4">
    <citation type="journal article" date="2007" name="FEBS Lett.">
        <title>Desulfoferrodoxin of Clostridium acetobutylicum functions as a superoxide reductase.</title>
        <authorList>
            <person name="Riebe O."/>
            <person name="Fischer R.J."/>
            <person name="Bahl H."/>
        </authorList>
    </citation>
    <scope>FUNCTION</scope>
    <scope>CATALYTIC ACTIVITY</scope>
    <scope>COFACTOR</scope>
    <scope>INDUCTION</scope>
    <source>
        <strain>ATCC 824 / DSM 792 / JCM 1419 / IAM 19013 / LMG 5710 / NBRC 13948 / NRRL B-527 / VKM B-1787 / 2291 / W</strain>
    </source>
</reference>
<reference key="5">
    <citation type="journal article" date="2008" name="Mol. Microbiol.">
        <title>PerR acts as a switch for oxygen tolerance in the strict anaerobe Clostridium acetobutylicum.</title>
        <authorList>
            <person name="Hillmann F."/>
            <person name="Fischer R.J."/>
            <person name="Saint-Prix F."/>
            <person name="Girbal L."/>
            <person name="Bahl H."/>
        </authorList>
    </citation>
    <scope>REPRESSION BY PERR</scope>
    <source>
        <strain>ATCC 824 / DSM 792 / JCM 1419 / IAM 19013 / LMG 5710 / NBRC 13948 / NRRL B-527 / VKM B-1787 / 2291 / W</strain>
    </source>
</reference>
<reference key="6">
    <citation type="journal article" date="2009" name="J. Bacteriol.">
        <title>The role of PerR in O2-affected gene expression of Clostridium acetobutylicum.</title>
        <authorList>
            <person name="Hillmann F."/>
            <person name="Doring C."/>
            <person name="Riebe O."/>
            <person name="Ehrenreich A."/>
            <person name="Fischer R.J."/>
            <person name="Bahl H."/>
        </authorList>
    </citation>
    <scope>INDUCTION BY O(2)</scope>
    <scope>REPRESSION BY PERR</scope>
    <source>
        <strain>ATCC 824 / DSM 792 / JCM 1419 / IAM 19013 / LMG 5710 / NBRC 13948 / NRRL B-527 / VKM B-1787 / 2291 / W</strain>
    </source>
</reference>
<feature type="chain" id="PRO_0000403463" description="Desulfoferrodoxin">
    <location>
        <begin position="1"/>
        <end position="125"/>
    </location>
</feature>
<feature type="binding site" evidence="1">
    <location>
        <position position="49"/>
    </location>
    <ligand>
        <name>Fe cation</name>
        <dbReference type="ChEBI" id="CHEBI:24875"/>
        <note>catalytic</note>
    </ligand>
</feature>
<feature type="binding site" evidence="1">
    <location>
        <position position="69"/>
    </location>
    <ligand>
        <name>Fe cation</name>
        <dbReference type="ChEBI" id="CHEBI:24875"/>
        <note>catalytic</note>
    </ligand>
</feature>
<feature type="binding site" evidence="1">
    <location>
        <position position="75"/>
    </location>
    <ligand>
        <name>Fe cation</name>
        <dbReference type="ChEBI" id="CHEBI:24875"/>
        <note>catalytic</note>
    </ligand>
</feature>
<feature type="binding site" evidence="1">
    <location>
        <position position="115"/>
    </location>
    <ligand>
        <name>Fe cation</name>
        <dbReference type="ChEBI" id="CHEBI:24875"/>
        <note>catalytic</note>
    </ligand>
</feature>
<feature type="binding site" evidence="1">
    <location>
        <position position="118"/>
    </location>
    <ligand>
        <name>Fe cation</name>
        <dbReference type="ChEBI" id="CHEBI:24875"/>
        <note>catalytic</note>
    </ligand>
</feature>
<protein>
    <recommendedName>
        <fullName>Desulfoferrodoxin</fullName>
        <shortName>Dfx</shortName>
    </recommendedName>
    <alternativeName>
        <fullName>Superoxide reductase</fullName>
        <shortName>SOR</shortName>
        <ecNumber>1.15.1.2</ecNumber>
    </alternativeName>
</protein>
<keyword id="KW-0216">Detoxification</keyword>
<keyword id="KW-0903">Direct protein sequencing</keyword>
<keyword id="KW-0249">Electron transport</keyword>
<keyword id="KW-0408">Iron</keyword>
<keyword id="KW-0479">Metal-binding</keyword>
<keyword id="KW-0560">Oxidoreductase</keyword>
<keyword id="KW-1185">Reference proteome</keyword>
<keyword id="KW-0346">Stress response</keyword>
<keyword id="KW-0813">Transport</keyword>
<sequence>MNNDLSIYVSKNSGTAVLLLQGNGTDLTCGSEPMAKIVANTTDAAQEKHVPHITKNGNNIDVSVGSVEHPMTPEHFIEWIILVSGDRLEMAKLTPDMKPRAQFHNVTSGTVYAYCNLHSLWKADI</sequence>
<comment type="function">
    <text evidence="3 5">Catalyzes the reduction of superoxide to hydrogen peroxide, using electrons from NADH and NADH:rubredoxin oxidoreductase (NROR) and rubredoxin (Rd) as electron transport intermediaries between NADH and Dfx. Is a key factor in the superoxide reductase dependent part of a pathway for detoxification of reactive oxygen species (ROS) in C.acetobutylicum, an obligate anaerobic bacterium.</text>
</comment>
<comment type="catalytic activity">
    <reaction evidence="3 5">
        <text>reduced [rubredoxin] + superoxide + 2 H(+) = oxidized [rubredoxin] + H2O2</text>
        <dbReference type="Rhea" id="RHEA:21324"/>
        <dbReference type="Rhea" id="RHEA-COMP:10302"/>
        <dbReference type="Rhea" id="RHEA-COMP:10303"/>
        <dbReference type="ChEBI" id="CHEBI:15378"/>
        <dbReference type="ChEBI" id="CHEBI:16240"/>
        <dbReference type="ChEBI" id="CHEBI:18421"/>
        <dbReference type="ChEBI" id="CHEBI:29033"/>
        <dbReference type="ChEBI" id="CHEBI:29034"/>
        <dbReference type="EC" id="1.15.1.2"/>
    </reaction>
</comment>
<comment type="cofactor">
    <cofactor evidence="3 5 7">
        <name>Cu(2+)</name>
        <dbReference type="ChEBI" id="CHEBI:29036"/>
    </cofactor>
    <text evidence="3 5 7">Binds 1 Fe(2+) ion per subunit. In contrast to some other SORs, does not bind a second iron ion.</text>
</comment>
<comment type="induction">
    <text evidence="2 3 4 5 6">Up-regulated after exposure to oxygen stress (at both transcript and protein levels). Repressed by PerR.</text>
</comment>
<comment type="miscellaneous">
    <text>The SOR reaction is believed to be advantageous to anaerobic bacteria, in comparison to SOD (superoxide dismutase), because SOR produces no oxygen by reducing superoxide.</text>
</comment>
<comment type="similarity">
    <text evidence="7">Belongs to the desulfoferrodoxin family.</text>
</comment>